<sequence length="227" mass="24695">MVAIAPVITVDGPSGAGKGTLCQALAEVLGWQLLDSGAIYRVLALAAIHHQVDIQSEDALVPLAANLDVRFVPRKGKLSVMLEGEDVSNEIRTEAVGNTASQAAAFPRVREALLRRQRAFRVAPGLIADGRDMGTVVFSDAPVKIFLDASAEERARRRMLQLQEKGFSVNFECLLSEIQERDYRDRNRAVAPLAPAKDALILDSTSMSIEEVIDKALNYAKKILSIT</sequence>
<keyword id="KW-0067">ATP-binding</keyword>
<keyword id="KW-0963">Cytoplasm</keyword>
<keyword id="KW-0418">Kinase</keyword>
<keyword id="KW-0547">Nucleotide-binding</keyword>
<keyword id="KW-1185">Reference proteome</keyword>
<keyword id="KW-0808">Transferase</keyword>
<comment type="catalytic activity">
    <reaction evidence="1">
        <text>CMP + ATP = CDP + ADP</text>
        <dbReference type="Rhea" id="RHEA:11600"/>
        <dbReference type="ChEBI" id="CHEBI:30616"/>
        <dbReference type="ChEBI" id="CHEBI:58069"/>
        <dbReference type="ChEBI" id="CHEBI:60377"/>
        <dbReference type="ChEBI" id="CHEBI:456216"/>
        <dbReference type="EC" id="2.7.4.25"/>
    </reaction>
</comment>
<comment type="catalytic activity">
    <reaction evidence="1">
        <text>dCMP + ATP = dCDP + ADP</text>
        <dbReference type="Rhea" id="RHEA:25094"/>
        <dbReference type="ChEBI" id="CHEBI:30616"/>
        <dbReference type="ChEBI" id="CHEBI:57566"/>
        <dbReference type="ChEBI" id="CHEBI:58593"/>
        <dbReference type="ChEBI" id="CHEBI:456216"/>
        <dbReference type="EC" id="2.7.4.25"/>
    </reaction>
</comment>
<comment type="subcellular location">
    <subcellularLocation>
        <location evidence="1">Cytoplasm</location>
    </subcellularLocation>
</comment>
<comment type="similarity">
    <text evidence="1">Belongs to the cytidylate kinase family. Type 1 subfamily.</text>
</comment>
<reference key="1">
    <citation type="journal article" date="2003" name="Nat. Biotechnol.">
        <title>The genome sequence of the entomopathogenic bacterium Photorhabdus luminescens.</title>
        <authorList>
            <person name="Duchaud E."/>
            <person name="Rusniok C."/>
            <person name="Frangeul L."/>
            <person name="Buchrieser C."/>
            <person name="Givaudan A."/>
            <person name="Taourit S."/>
            <person name="Bocs S."/>
            <person name="Boursaux-Eude C."/>
            <person name="Chandler M."/>
            <person name="Charles J.-F."/>
            <person name="Dassa E."/>
            <person name="Derose R."/>
            <person name="Derzelle S."/>
            <person name="Freyssinet G."/>
            <person name="Gaudriault S."/>
            <person name="Medigue C."/>
            <person name="Lanois A."/>
            <person name="Powell K."/>
            <person name="Siguier P."/>
            <person name="Vincent R."/>
            <person name="Wingate V."/>
            <person name="Zouine M."/>
            <person name="Glaser P."/>
            <person name="Boemare N."/>
            <person name="Danchin A."/>
            <person name="Kunst F."/>
        </authorList>
    </citation>
    <scope>NUCLEOTIDE SEQUENCE [LARGE SCALE GENOMIC DNA]</scope>
    <source>
        <strain>DSM 15139 / CIP 105565 / TT01</strain>
    </source>
</reference>
<organism>
    <name type="scientific">Photorhabdus laumondii subsp. laumondii (strain DSM 15139 / CIP 105565 / TT01)</name>
    <name type="common">Photorhabdus luminescens subsp. laumondii</name>
    <dbReference type="NCBI Taxonomy" id="243265"/>
    <lineage>
        <taxon>Bacteria</taxon>
        <taxon>Pseudomonadati</taxon>
        <taxon>Pseudomonadota</taxon>
        <taxon>Gammaproteobacteria</taxon>
        <taxon>Enterobacterales</taxon>
        <taxon>Morganellaceae</taxon>
        <taxon>Photorhabdus</taxon>
    </lineage>
</organism>
<name>KCY_PHOLL</name>
<proteinExistence type="inferred from homology"/>
<dbReference type="EC" id="2.7.4.25" evidence="1"/>
<dbReference type="EMBL" id="BX571864">
    <property type="protein sequence ID" value="CAE13914.1"/>
    <property type="molecule type" value="Genomic_DNA"/>
</dbReference>
<dbReference type="RefSeq" id="WP_011145913.1">
    <property type="nucleotide sequence ID" value="NC_005126.1"/>
</dbReference>
<dbReference type="SMR" id="Q7N6D4"/>
<dbReference type="STRING" id="243265.plu1621"/>
<dbReference type="GeneID" id="48847909"/>
<dbReference type="KEGG" id="plu:plu1621"/>
<dbReference type="eggNOG" id="COG0283">
    <property type="taxonomic scope" value="Bacteria"/>
</dbReference>
<dbReference type="HOGENOM" id="CLU_079959_2_0_6"/>
<dbReference type="OrthoDB" id="9807434at2"/>
<dbReference type="Proteomes" id="UP000002514">
    <property type="component" value="Chromosome"/>
</dbReference>
<dbReference type="GO" id="GO:0005829">
    <property type="term" value="C:cytosol"/>
    <property type="evidence" value="ECO:0007669"/>
    <property type="project" value="TreeGrafter"/>
</dbReference>
<dbReference type="GO" id="GO:0005524">
    <property type="term" value="F:ATP binding"/>
    <property type="evidence" value="ECO:0007669"/>
    <property type="project" value="UniProtKB-UniRule"/>
</dbReference>
<dbReference type="GO" id="GO:0036430">
    <property type="term" value="F:CMP kinase activity"/>
    <property type="evidence" value="ECO:0007669"/>
    <property type="project" value="RHEA"/>
</dbReference>
<dbReference type="GO" id="GO:0036431">
    <property type="term" value="F:dCMP kinase activity"/>
    <property type="evidence" value="ECO:0007669"/>
    <property type="project" value="RHEA"/>
</dbReference>
<dbReference type="GO" id="GO:0015949">
    <property type="term" value="P:nucleobase-containing small molecule interconversion"/>
    <property type="evidence" value="ECO:0007669"/>
    <property type="project" value="TreeGrafter"/>
</dbReference>
<dbReference type="GO" id="GO:0006220">
    <property type="term" value="P:pyrimidine nucleotide metabolic process"/>
    <property type="evidence" value="ECO:0007669"/>
    <property type="project" value="UniProtKB-UniRule"/>
</dbReference>
<dbReference type="CDD" id="cd02020">
    <property type="entry name" value="CMPK"/>
    <property type="match status" value="1"/>
</dbReference>
<dbReference type="FunFam" id="3.40.50.300:FF:000262">
    <property type="entry name" value="Cytidylate kinase"/>
    <property type="match status" value="1"/>
</dbReference>
<dbReference type="Gene3D" id="3.40.50.300">
    <property type="entry name" value="P-loop containing nucleotide triphosphate hydrolases"/>
    <property type="match status" value="1"/>
</dbReference>
<dbReference type="HAMAP" id="MF_00238">
    <property type="entry name" value="Cytidyl_kinase_type1"/>
    <property type="match status" value="1"/>
</dbReference>
<dbReference type="InterPro" id="IPR003136">
    <property type="entry name" value="Cytidylate_kin"/>
</dbReference>
<dbReference type="InterPro" id="IPR011994">
    <property type="entry name" value="Cytidylate_kinase_dom"/>
</dbReference>
<dbReference type="InterPro" id="IPR027417">
    <property type="entry name" value="P-loop_NTPase"/>
</dbReference>
<dbReference type="NCBIfam" id="TIGR00017">
    <property type="entry name" value="cmk"/>
    <property type="match status" value="1"/>
</dbReference>
<dbReference type="PANTHER" id="PTHR21299:SF2">
    <property type="entry name" value="CYTIDYLATE KINASE"/>
    <property type="match status" value="1"/>
</dbReference>
<dbReference type="PANTHER" id="PTHR21299">
    <property type="entry name" value="CYTIDYLATE KINASE/PANTOATE-BETA-ALANINE LIGASE"/>
    <property type="match status" value="1"/>
</dbReference>
<dbReference type="Pfam" id="PF02224">
    <property type="entry name" value="Cytidylate_kin"/>
    <property type="match status" value="1"/>
</dbReference>
<dbReference type="SUPFAM" id="SSF52540">
    <property type="entry name" value="P-loop containing nucleoside triphosphate hydrolases"/>
    <property type="match status" value="1"/>
</dbReference>
<accession>Q7N6D4</accession>
<evidence type="ECO:0000255" key="1">
    <source>
        <dbReference type="HAMAP-Rule" id="MF_00238"/>
    </source>
</evidence>
<gene>
    <name evidence="1" type="primary">cmk</name>
    <name type="ordered locus">plu1621</name>
</gene>
<protein>
    <recommendedName>
        <fullName evidence="1">Cytidylate kinase</fullName>
        <shortName evidence="1">CK</shortName>
        <ecNumber evidence="1">2.7.4.25</ecNumber>
    </recommendedName>
    <alternativeName>
        <fullName evidence="1">Cytidine monophosphate kinase</fullName>
        <shortName evidence="1">CMP kinase</shortName>
    </alternativeName>
</protein>
<feature type="chain" id="PRO_0000131952" description="Cytidylate kinase">
    <location>
        <begin position="1"/>
        <end position="227"/>
    </location>
</feature>
<feature type="binding site" evidence="1">
    <location>
        <begin position="12"/>
        <end position="20"/>
    </location>
    <ligand>
        <name>ATP</name>
        <dbReference type="ChEBI" id="CHEBI:30616"/>
    </ligand>
</feature>